<reference key="1">
    <citation type="journal article" date="2002" name="Science">
        <title>50 million years of genomic stasis in endosymbiotic bacteria.</title>
        <authorList>
            <person name="Tamas I."/>
            <person name="Klasson L."/>
            <person name="Canbaeck B."/>
            <person name="Naeslund A.K."/>
            <person name="Eriksson A.-S."/>
            <person name="Wernegreen J.J."/>
            <person name="Sandstroem J.P."/>
            <person name="Moran N.A."/>
            <person name="Andersson S.G.E."/>
        </authorList>
    </citation>
    <scope>NUCLEOTIDE SEQUENCE [LARGE SCALE GENOMIC DNA]</scope>
    <source>
        <strain>Sg</strain>
    </source>
</reference>
<protein>
    <recommendedName>
        <fullName>Septum site-determining protein MinD</fullName>
    </recommendedName>
    <alternativeName>
        <fullName>Cell division inhibitor MinD</fullName>
    </alternativeName>
</protein>
<evidence type="ECO:0000250" key="1"/>
<evidence type="ECO:0000250" key="2">
    <source>
        <dbReference type="UniProtKB" id="Q72H90"/>
    </source>
</evidence>
<evidence type="ECO:0000305" key="3"/>
<name>MIND_BUCAP</name>
<feature type="initiator methionine" description="Removed" evidence="1">
    <location>
        <position position="1"/>
    </location>
</feature>
<feature type="chain" id="PRO_0000201966" description="Septum site-determining protein MinD">
    <location>
        <begin position="2"/>
        <end position="270"/>
    </location>
</feature>
<feature type="binding site" evidence="2">
    <location>
        <begin position="11"/>
        <end position="18"/>
    </location>
    <ligand>
        <name>ATP</name>
        <dbReference type="ChEBI" id="CHEBI:30616"/>
    </ligand>
</feature>
<accession>Q8K9L7</accession>
<organism>
    <name type="scientific">Buchnera aphidicola subsp. Schizaphis graminum (strain Sg)</name>
    <dbReference type="NCBI Taxonomy" id="198804"/>
    <lineage>
        <taxon>Bacteria</taxon>
        <taxon>Pseudomonadati</taxon>
        <taxon>Pseudomonadota</taxon>
        <taxon>Gammaproteobacteria</taxon>
        <taxon>Enterobacterales</taxon>
        <taxon>Erwiniaceae</taxon>
        <taxon>Buchnera</taxon>
    </lineage>
</organism>
<gene>
    <name type="primary">minD</name>
    <name type="ordered locus">BUsg_317</name>
</gene>
<proteinExistence type="inferred from homology"/>
<dbReference type="EMBL" id="AE013218">
    <property type="protein sequence ID" value="AAM67871.1"/>
    <property type="molecule type" value="Genomic_DNA"/>
</dbReference>
<dbReference type="RefSeq" id="WP_011053838.1">
    <property type="nucleotide sequence ID" value="NC_004061.1"/>
</dbReference>
<dbReference type="SMR" id="Q8K9L7"/>
<dbReference type="STRING" id="198804.BUsg_317"/>
<dbReference type="GeneID" id="93003786"/>
<dbReference type="KEGG" id="bas:BUsg_317"/>
<dbReference type="eggNOG" id="COG2894">
    <property type="taxonomic scope" value="Bacteria"/>
</dbReference>
<dbReference type="HOGENOM" id="CLU_037612_0_1_6"/>
<dbReference type="Proteomes" id="UP000000416">
    <property type="component" value="Chromosome"/>
</dbReference>
<dbReference type="GO" id="GO:0009898">
    <property type="term" value="C:cytoplasmic side of plasma membrane"/>
    <property type="evidence" value="ECO:0007669"/>
    <property type="project" value="TreeGrafter"/>
</dbReference>
<dbReference type="GO" id="GO:0005829">
    <property type="term" value="C:cytosol"/>
    <property type="evidence" value="ECO:0007669"/>
    <property type="project" value="TreeGrafter"/>
</dbReference>
<dbReference type="GO" id="GO:0005524">
    <property type="term" value="F:ATP binding"/>
    <property type="evidence" value="ECO:0007669"/>
    <property type="project" value="UniProtKB-KW"/>
</dbReference>
<dbReference type="GO" id="GO:0016887">
    <property type="term" value="F:ATP hydrolysis activity"/>
    <property type="evidence" value="ECO:0007669"/>
    <property type="project" value="InterPro"/>
</dbReference>
<dbReference type="GO" id="GO:0000917">
    <property type="term" value="P:division septum assembly"/>
    <property type="evidence" value="ECO:0007669"/>
    <property type="project" value="UniProtKB-KW"/>
</dbReference>
<dbReference type="GO" id="GO:0051782">
    <property type="term" value="P:negative regulation of cell division"/>
    <property type="evidence" value="ECO:0007669"/>
    <property type="project" value="TreeGrafter"/>
</dbReference>
<dbReference type="CDD" id="cd02036">
    <property type="entry name" value="MinD"/>
    <property type="match status" value="1"/>
</dbReference>
<dbReference type="FunFam" id="3.40.50.300:FF:000068">
    <property type="entry name" value="Site-determining protein"/>
    <property type="match status" value="1"/>
</dbReference>
<dbReference type="Gene3D" id="3.40.50.300">
    <property type="entry name" value="P-loop containing nucleotide triphosphate hydrolases"/>
    <property type="match status" value="1"/>
</dbReference>
<dbReference type="InterPro" id="IPR025669">
    <property type="entry name" value="AAA_dom"/>
</dbReference>
<dbReference type="InterPro" id="IPR010223">
    <property type="entry name" value="MinD"/>
</dbReference>
<dbReference type="InterPro" id="IPR025501">
    <property type="entry name" value="MinD_FleN"/>
</dbReference>
<dbReference type="InterPro" id="IPR027417">
    <property type="entry name" value="P-loop_NTPase"/>
</dbReference>
<dbReference type="InterPro" id="IPR050625">
    <property type="entry name" value="ParA/MinD_ATPase"/>
</dbReference>
<dbReference type="NCBIfam" id="TIGR01968">
    <property type="entry name" value="minD_bact"/>
    <property type="match status" value="1"/>
</dbReference>
<dbReference type="NCBIfam" id="NF008079">
    <property type="entry name" value="PRK10818.1"/>
    <property type="match status" value="1"/>
</dbReference>
<dbReference type="PANTHER" id="PTHR43384:SF6">
    <property type="entry name" value="SEPTUM SITE-DETERMINING PROTEIN MIND HOMOLOG, CHLOROPLASTIC"/>
    <property type="match status" value="1"/>
</dbReference>
<dbReference type="PANTHER" id="PTHR43384">
    <property type="entry name" value="SEPTUM SITE-DETERMINING PROTEIN MIND HOMOLOG, CHLOROPLASTIC-RELATED"/>
    <property type="match status" value="1"/>
</dbReference>
<dbReference type="Pfam" id="PF13614">
    <property type="entry name" value="AAA_31"/>
    <property type="match status" value="1"/>
</dbReference>
<dbReference type="PIRSF" id="PIRSF003092">
    <property type="entry name" value="MinD"/>
    <property type="match status" value="1"/>
</dbReference>
<dbReference type="SUPFAM" id="SSF52540">
    <property type="entry name" value="P-loop containing nucleoside triphosphate hydrolases"/>
    <property type="match status" value="1"/>
</dbReference>
<comment type="function">
    <text evidence="1">ATPase required for the correct placement of the division site. Cell division inhibitors MinC and MinD act in concert to form an inhibitor capable of blocking formation of the polar Z ring septums. Rapidly oscillates between the poles of the cell to destabilize FtsZ filaments that have formed before they mature into polar Z rings (By similarity).</text>
</comment>
<comment type="subunit">
    <text evidence="1">Interacts with MinC and FtsZ.</text>
</comment>
<comment type="subcellular location">
    <subcellularLocation>
        <location evidence="1">Cell membrane</location>
        <topology evidence="1">Peripheral membrane protein</topology>
    </subcellularLocation>
</comment>
<comment type="similarity">
    <text evidence="3">Belongs to the ParA family. MinD subfamily.</text>
</comment>
<sequence>MTRIIVVTSGKGGVGKTTSSAAIATGLAQKGKKTVVIDFDIGLRNLDLIMGCERRVVYDFINVIQGDARIQQALIKDKKTKNLFILPASQTRDKESLTYSGVEKVLNQLINMEFDFIICDSPAGIETGAILAIYFADEAIVTTNPEVSSVRDSDRILGIISSKSKRSEKNITPIKEYLLLTRYNPTRVKKGEMLSMKDVIEILRIPIIGVIPEDASVLRASNQGESIILDQNSNAGSAYFDTVNRLLGENHKFRFIEEEKKSFLRRLFGR</sequence>
<keyword id="KW-0067">ATP-binding</keyword>
<keyword id="KW-0131">Cell cycle</keyword>
<keyword id="KW-0132">Cell division</keyword>
<keyword id="KW-1003">Cell membrane</keyword>
<keyword id="KW-0472">Membrane</keyword>
<keyword id="KW-0547">Nucleotide-binding</keyword>
<keyword id="KW-0717">Septation</keyword>